<dbReference type="EMBL" id="DS469599">
    <property type="protein sequence ID" value="EDO39885.1"/>
    <property type="molecule type" value="Genomic_DNA"/>
</dbReference>
<dbReference type="SMR" id="A7S8T5"/>
<dbReference type="STRING" id="45351.A7S8T5"/>
<dbReference type="EnsemblMetazoa" id="EDO39885">
    <property type="protein sequence ID" value="EDO39885"/>
    <property type="gene ID" value="NEMVEDRAFT_v1g187067"/>
</dbReference>
<dbReference type="KEGG" id="nve:5511566"/>
<dbReference type="eggNOG" id="ENOG502QRZS">
    <property type="taxonomic scope" value="Eukaryota"/>
</dbReference>
<dbReference type="HOGENOM" id="CLU_061472_2_1_1"/>
<dbReference type="InParanoid" id="A7S8T5"/>
<dbReference type="OMA" id="SIEMLYI"/>
<dbReference type="OrthoDB" id="10264298at2759"/>
<dbReference type="PhylomeDB" id="A7S8T5"/>
<dbReference type="Proteomes" id="UP000001593">
    <property type="component" value="Unassembled WGS sequence"/>
</dbReference>
<dbReference type="GO" id="GO:0005856">
    <property type="term" value="C:cytoskeleton"/>
    <property type="evidence" value="ECO:0007669"/>
    <property type="project" value="UniProtKB-ARBA"/>
</dbReference>
<dbReference type="InterPro" id="IPR051147">
    <property type="entry name" value="CFAP_domain-containing"/>
</dbReference>
<dbReference type="InterPro" id="IPR025252">
    <property type="entry name" value="DUF4200"/>
</dbReference>
<dbReference type="PANTHER" id="PTHR21683:SF2">
    <property type="entry name" value="COILED-COIL DOMAIN-CONTAINING PROTEIN 42 LIKE-2-LIKE"/>
    <property type="match status" value="1"/>
</dbReference>
<dbReference type="PANTHER" id="PTHR21683">
    <property type="entry name" value="COILED-COIL DOMAIN-CONTAINING PROTEIN 42 LIKE-2-LIKE-RELATED"/>
    <property type="match status" value="1"/>
</dbReference>
<dbReference type="Pfam" id="PF13863">
    <property type="entry name" value="DUF4200"/>
    <property type="match status" value="1"/>
</dbReference>
<gene>
    <name type="ORF">v1g187067</name>
</gene>
<proteinExistence type="inferred from homology"/>
<organism>
    <name type="scientific">Nematostella vectensis</name>
    <name type="common">Starlet sea anemone</name>
    <dbReference type="NCBI Taxonomy" id="45351"/>
    <lineage>
        <taxon>Eukaryota</taxon>
        <taxon>Metazoa</taxon>
        <taxon>Cnidaria</taxon>
        <taxon>Anthozoa</taxon>
        <taxon>Hexacorallia</taxon>
        <taxon>Actiniaria</taxon>
        <taxon>Edwardsiidae</taxon>
        <taxon>Nematostella</taxon>
    </lineage>
</organism>
<accession>A7S8T5</accession>
<evidence type="ECO:0000255" key="1"/>
<evidence type="ECO:0000305" key="2"/>
<keyword id="KW-0175">Coiled coil</keyword>
<keyword id="KW-1185">Reference proteome</keyword>
<protein>
    <recommendedName>
        <fullName evidence="2">Coiled-coil domain-containing protein 42 homolog</fullName>
    </recommendedName>
</protein>
<feature type="chain" id="PRO_0000343719" description="Coiled-coil domain-containing protein 42 homolog">
    <location>
        <begin position="1"/>
        <end position="312"/>
    </location>
</feature>
<feature type="coiled-coil region" evidence="1">
    <location>
        <begin position="34"/>
        <end position="121"/>
    </location>
</feature>
<feature type="coiled-coil region" evidence="1">
    <location>
        <begin position="172"/>
        <end position="233"/>
    </location>
</feature>
<sequence length="312" mass="37043">MTVNLEEYFRTTFEDKLLVKMPEREDDHLTPATRLLEKRREMSEVEQALGAQKEEFQMKMESLQQRREELERKEYQLRESLLKFDKFLKENDSKRARALKKAQEERDMRRAKDCEIARLKEDTSGLMKGRDKVQHRLEKYIIYQQYLEKVLENAEEFQEIREIIARYDTLTATHQDLLERELKNQEKYEKEKARLIKFTEEKNNEILNYNNQLANLQTKLEKTQSVAVKWESQWTHIKNTAAKKTLLLGRIKMATHNLFMLVNRHLGQTGMVDMTDKQLDKIQVFIQDLTQITLDIKRAENAITASGANTAG</sequence>
<comment type="similarity">
    <text evidence="2">Belongs to the CFAP73 family.</text>
</comment>
<name>CCD42_NEMVE</name>
<reference key="1">
    <citation type="journal article" date="2007" name="Science">
        <title>Sea anemone genome reveals ancestral eumetazoan gene repertoire and genomic organization.</title>
        <authorList>
            <person name="Putnam N.H."/>
            <person name="Srivastava M."/>
            <person name="Hellsten U."/>
            <person name="Dirks B."/>
            <person name="Chapman J."/>
            <person name="Salamov A."/>
            <person name="Terry A."/>
            <person name="Shapiro H."/>
            <person name="Lindquist E."/>
            <person name="Kapitonov V.V."/>
            <person name="Jurka J."/>
            <person name="Genikhovich G."/>
            <person name="Grigoriev I.V."/>
            <person name="Lucas S.M."/>
            <person name="Steele R.E."/>
            <person name="Finnerty J.R."/>
            <person name="Technau U."/>
            <person name="Martindale M.Q."/>
            <person name="Rokhsar D.S."/>
        </authorList>
    </citation>
    <scope>NUCLEOTIDE SEQUENCE [LARGE SCALE GENOMIC DNA]</scope>
    <source>
        <strain>CH2 X CH6</strain>
    </source>
</reference>